<organism>
    <name type="scientific">Pinus koraiensis</name>
    <name type="common">Korean pine</name>
    <dbReference type="NCBI Taxonomy" id="88728"/>
    <lineage>
        <taxon>Eukaryota</taxon>
        <taxon>Viridiplantae</taxon>
        <taxon>Streptophyta</taxon>
        <taxon>Embryophyta</taxon>
        <taxon>Tracheophyta</taxon>
        <taxon>Spermatophyta</taxon>
        <taxon>Pinopsida</taxon>
        <taxon>Pinidae</taxon>
        <taxon>Conifers I</taxon>
        <taxon>Pinales</taxon>
        <taxon>Pinaceae</taxon>
        <taxon>Pinus</taxon>
        <taxon>Pinus subgen. Strobus</taxon>
    </lineage>
</organism>
<name>RR18_PINKO</name>
<proteinExistence type="inferred from homology"/>
<sequence length="93" mass="11153">MKQTMDKPKRSFRRHLKPIRRHLKPIRRHLSPIRSGDRIDYKNMSLISRFISEQGKILSGRVNRLTSKQQRLMTNAIKRARILSLLPFLYNEN</sequence>
<dbReference type="EMBL" id="AY228468">
    <property type="protein sequence ID" value="AAO74028.1"/>
    <property type="molecule type" value="Genomic_DNA"/>
</dbReference>
<dbReference type="RefSeq" id="NP_817180.2">
    <property type="nucleotide sequence ID" value="NC_004677.2"/>
</dbReference>
<dbReference type="SMR" id="Q85X35"/>
<dbReference type="GeneID" id="806906"/>
<dbReference type="GO" id="GO:0009507">
    <property type="term" value="C:chloroplast"/>
    <property type="evidence" value="ECO:0007669"/>
    <property type="project" value="UniProtKB-SubCell"/>
</dbReference>
<dbReference type="GO" id="GO:0005763">
    <property type="term" value="C:mitochondrial small ribosomal subunit"/>
    <property type="evidence" value="ECO:0007669"/>
    <property type="project" value="TreeGrafter"/>
</dbReference>
<dbReference type="GO" id="GO:0070181">
    <property type="term" value="F:small ribosomal subunit rRNA binding"/>
    <property type="evidence" value="ECO:0007669"/>
    <property type="project" value="TreeGrafter"/>
</dbReference>
<dbReference type="GO" id="GO:0003735">
    <property type="term" value="F:structural constituent of ribosome"/>
    <property type="evidence" value="ECO:0007669"/>
    <property type="project" value="InterPro"/>
</dbReference>
<dbReference type="GO" id="GO:0006412">
    <property type="term" value="P:translation"/>
    <property type="evidence" value="ECO:0007669"/>
    <property type="project" value="UniProtKB-UniRule"/>
</dbReference>
<dbReference type="FunFam" id="4.10.640.10:FF:000002">
    <property type="entry name" value="30S ribosomal protein S18, chloroplastic"/>
    <property type="match status" value="1"/>
</dbReference>
<dbReference type="Gene3D" id="4.10.640.10">
    <property type="entry name" value="Ribosomal protein S18"/>
    <property type="match status" value="1"/>
</dbReference>
<dbReference type="HAMAP" id="MF_00270">
    <property type="entry name" value="Ribosomal_bS18"/>
    <property type="match status" value="1"/>
</dbReference>
<dbReference type="InterPro" id="IPR001648">
    <property type="entry name" value="Ribosomal_bS18"/>
</dbReference>
<dbReference type="InterPro" id="IPR018275">
    <property type="entry name" value="Ribosomal_bS18_CS"/>
</dbReference>
<dbReference type="InterPro" id="IPR036870">
    <property type="entry name" value="Ribosomal_bS18_sf"/>
</dbReference>
<dbReference type="NCBIfam" id="TIGR00165">
    <property type="entry name" value="S18"/>
    <property type="match status" value="1"/>
</dbReference>
<dbReference type="PANTHER" id="PTHR13479">
    <property type="entry name" value="30S RIBOSOMAL PROTEIN S18"/>
    <property type="match status" value="1"/>
</dbReference>
<dbReference type="PANTHER" id="PTHR13479:SF40">
    <property type="entry name" value="SMALL RIBOSOMAL SUBUNIT PROTEIN BS18M"/>
    <property type="match status" value="1"/>
</dbReference>
<dbReference type="Pfam" id="PF01084">
    <property type="entry name" value="Ribosomal_S18"/>
    <property type="match status" value="1"/>
</dbReference>
<dbReference type="PRINTS" id="PR00974">
    <property type="entry name" value="RIBOSOMALS18"/>
</dbReference>
<dbReference type="SUPFAM" id="SSF46911">
    <property type="entry name" value="Ribosomal protein S18"/>
    <property type="match status" value="1"/>
</dbReference>
<dbReference type="PROSITE" id="PS00057">
    <property type="entry name" value="RIBOSOMAL_S18"/>
    <property type="match status" value="1"/>
</dbReference>
<feature type="chain" id="PRO_0000111304" description="Small ribosomal subunit protein bS18c">
    <location>
        <begin position="1"/>
        <end position="93"/>
    </location>
</feature>
<evidence type="ECO:0000255" key="1">
    <source>
        <dbReference type="HAMAP-Rule" id="MF_00270"/>
    </source>
</evidence>
<evidence type="ECO:0000305" key="2"/>
<keyword id="KW-0150">Chloroplast</keyword>
<keyword id="KW-0934">Plastid</keyword>
<keyword id="KW-0687">Ribonucleoprotein</keyword>
<keyword id="KW-0689">Ribosomal protein</keyword>
<keyword id="KW-0694">RNA-binding</keyword>
<keyword id="KW-0699">rRNA-binding</keyword>
<accession>Q85X35</accession>
<geneLocation type="chloroplast"/>
<comment type="subunit">
    <text>Part of the 30S ribosomal subunit.</text>
</comment>
<comment type="subcellular location">
    <subcellularLocation>
        <location>Plastid</location>
        <location>Chloroplast</location>
    </subcellularLocation>
</comment>
<comment type="similarity">
    <text evidence="1">Belongs to the bacterial ribosomal protein bS18 family.</text>
</comment>
<protein>
    <recommendedName>
        <fullName evidence="1">Small ribosomal subunit protein bS18c</fullName>
    </recommendedName>
    <alternativeName>
        <fullName evidence="2">30S ribosomal protein S18, chloroplastic</fullName>
    </alternativeName>
</protein>
<reference key="1">
    <citation type="submission" date="2003-02" db="EMBL/GenBank/DDBJ databases">
        <title>Complete nucleotide sequence of Pinus koraiensis.</title>
        <authorList>
            <person name="Noh E.W."/>
            <person name="Lee J.S."/>
            <person name="Choi Y.I."/>
            <person name="Han M.S."/>
            <person name="Yi Y.S."/>
            <person name="Han S.U."/>
        </authorList>
    </citation>
    <scope>NUCLEOTIDE SEQUENCE [LARGE SCALE GENOMIC DNA]</scope>
    <source>
        <strain>KangWon16</strain>
    </source>
</reference>
<gene>
    <name evidence="1" type="primary">rps18</name>
</gene>